<accession>C6DE42</accession>
<comment type="function">
    <text evidence="1">Catalyzes the facilitated diffusion of 2-acyl-glycero-3-phosphoethanolamine (2-acyl-GPE) into the cell.</text>
</comment>
<comment type="subcellular location">
    <subcellularLocation>
        <location evidence="1">Cell inner membrane</location>
        <topology evidence="1">Multi-pass membrane protein</topology>
    </subcellularLocation>
</comment>
<comment type="similarity">
    <text evidence="1">Belongs to the major facilitator superfamily. LplT (TC 2.A.1.42) family.</text>
</comment>
<organism>
    <name type="scientific">Pectobacterium carotovorum subsp. carotovorum (strain PC1)</name>
    <dbReference type="NCBI Taxonomy" id="561230"/>
    <lineage>
        <taxon>Bacteria</taxon>
        <taxon>Pseudomonadati</taxon>
        <taxon>Pseudomonadota</taxon>
        <taxon>Gammaproteobacteria</taxon>
        <taxon>Enterobacterales</taxon>
        <taxon>Pectobacteriaceae</taxon>
        <taxon>Pectobacterium</taxon>
    </lineage>
</organism>
<evidence type="ECO:0000255" key="1">
    <source>
        <dbReference type="HAMAP-Rule" id="MF_01585"/>
    </source>
</evidence>
<sequence length="407" mass="42614">MSQQTEPATPLLSRSMNAVIIAQFFSAFGDNALLFATLALIKQLVYPDWSQPFLQMGFVAAYIILAPFVGQIADSFSKGQVMMFANTLKLAGALLICVGGNPFLGYTLVGVGAAAYSPAKYGILGEITRGDQLVKANGLMEASTIAAILTGSVAGGVLADWNIYGALSICAVAYGIALGANMLIPRLNAARPGQPWHPVQMASSFFSACRVLWRDGDARLSLVGTSMFWGAGVTLRFLLVLWVPHALGITDNATPTLLNAMVAVGIVVGAGAAAKLVTLDSVRRCLPAGFLIGVVVVIFTLQHNLMSAYSLLILLGALGGFFIVPLNALLQERGKASVGAGNAIAVQNLGENGAMLLMLGLYSLVVKLGVSVIAIGIGFGVLFALAIALLWVWLILAKRRDRSASAE</sequence>
<gene>
    <name evidence="1" type="primary">lplT</name>
    <name type="ordered locus">PC1_3462</name>
</gene>
<proteinExistence type="inferred from homology"/>
<dbReference type="EMBL" id="CP001657">
    <property type="protein sequence ID" value="ACT14478.1"/>
    <property type="molecule type" value="Genomic_DNA"/>
</dbReference>
<dbReference type="RefSeq" id="WP_015841601.1">
    <property type="nucleotide sequence ID" value="NC_012917.1"/>
</dbReference>
<dbReference type="SMR" id="C6DE42"/>
<dbReference type="STRING" id="561230.PC1_3462"/>
<dbReference type="KEGG" id="pct:PC1_3462"/>
<dbReference type="eggNOG" id="COG0477">
    <property type="taxonomic scope" value="Bacteria"/>
</dbReference>
<dbReference type="HOGENOM" id="CLU_047399_0_0_6"/>
<dbReference type="OrthoDB" id="9803968at2"/>
<dbReference type="Proteomes" id="UP000002736">
    <property type="component" value="Chromosome"/>
</dbReference>
<dbReference type="GO" id="GO:0005886">
    <property type="term" value="C:plasma membrane"/>
    <property type="evidence" value="ECO:0007669"/>
    <property type="project" value="UniProtKB-SubCell"/>
</dbReference>
<dbReference type="GO" id="GO:0051978">
    <property type="term" value="F:lysophospholipid:sodium symporter activity"/>
    <property type="evidence" value="ECO:0007669"/>
    <property type="project" value="InterPro"/>
</dbReference>
<dbReference type="CDD" id="cd06173">
    <property type="entry name" value="MFS_MefA_like"/>
    <property type="match status" value="1"/>
</dbReference>
<dbReference type="Gene3D" id="1.20.1250.20">
    <property type="entry name" value="MFS general substrate transporter like domains"/>
    <property type="match status" value="1"/>
</dbReference>
<dbReference type="HAMAP" id="MF_01585">
    <property type="entry name" value="MFS_LplT"/>
    <property type="match status" value="1"/>
</dbReference>
<dbReference type="InterPro" id="IPR023727">
    <property type="entry name" value="LysoPLipid__transptr_LplT"/>
</dbReference>
<dbReference type="InterPro" id="IPR011701">
    <property type="entry name" value="MFS"/>
</dbReference>
<dbReference type="InterPro" id="IPR036259">
    <property type="entry name" value="MFS_trans_sf"/>
</dbReference>
<dbReference type="NCBIfam" id="NF008397">
    <property type="entry name" value="PRK11195.1"/>
    <property type="match status" value="1"/>
</dbReference>
<dbReference type="PANTHER" id="PTHR43266">
    <property type="entry name" value="MACROLIDE-EFFLUX PROTEIN"/>
    <property type="match status" value="1"/>
</dbReference>
<dbReference type="PANTHER" id="PTHR43266:SF2">
    <property type="entry name" value="MAJOR FACILITATOR SUPERFAMILY (MFS) PROFILE DOMAIN-CONTAINING PROTEIN"/>
    <property type="match status" value="1"/>
</dbReference>
<dbReference type="Pfam" id="PF07690">
    <property type="entry name" value="MFS_1"/>
    <property type="match status" value="1"/>
</dbReference>
<dbReference type="SUPFAM" id="SSF103473">
    <property type="entry name" value="MFS general substrate transporter"/>
    <property type="match status" value="1"/>
</dbReference>
<keyword id="KW-0997">Cell inner membrane</keyword>
<keyword id="KW-1003">Cell membrane</keyword>
<keyword id="KW-0445">Lipid transport</keyword>
<keyword id="KW-0472">Membrane</keyword>
<keyword id="KW-0812">Transmembrane</keyword>
<keyword id="KW-1133">Transmembrane helix</keyword>
<keyword id="KW-0813">Transport</keyword>
<reference key="1">
    <citation type="submission" date="2009-07" db="EMBL/GenBank/DDBJ databases">
        <title>Complete sequence of Pectobacterium carotovorum subsp. carotovorum PC1.</title>
        <authorList>
            <consortium name="US DOE Joint Genome Institute"/>
            <person name="Lucas S."/>
            <person name="Copeland A."/>
            <person name="Lapidus A."/>
            <person name="Glavina del Rio T."/>
            <person name="Tice H."/>
            <person name="Bruce D."/>
            <person name="Goodwin L."/>
            <person name="Pitluck S."/>
            <person name="Munk A.C."/>
            <person name="Brettin T."/>
            <person name="Detter J.C."/>
            <person name="Han C."/>
            <person name="Tapia R."/>
            <person name="Larimer F."/>
            <person name="Land M."/>
            <person name="Hauser L."/>
            <person name="Kyrpides N."/>
            <person name="Mikhailova N."/>
            <person name="Balakrishnan V."/>
            <person name="Glasner J."/>
            <person name="Perna N.T."/>
        </authorList>
    </citation>
    <scope>NUCLEOTIDE SEQUENCE [LARGE SCALE GENOMIC DNA]</scope>
    <source>
        <strain>PC1</strain>
    </source>
</reference>
<feature type="chain" id="PRO_1000215630" description="Lysophospholipid transporter LplT">
    <location>
        <begin position="1"/>
        <end position="407"/>
    </location>
</feature>
<feature type="transmembrane region" description="Helical" evidence="1">
    <location>
        <begin position="18"/>
        <end position="38"/>
    </location>
</feature>
<feature type="transmembrane region" description="Helical" evidence="1">
    <location>
        <begin position="53"/>
        <end position="73"/>
    </location>
</feature>
<feature type="transmembrane region" description="Helical" evidence="1">
    <location>
        <begin position="91"/>
        <end position="111"/>
    </location>
</feature>
<feature type="transmembrane region" description="Helical" evidence="1">
    <location>
        <begin position="139"/>
        <end position="159"/>
    </location>
</feature>
<feature type="transmembrane region" description="Helical" evidence="1">
    <location>
        <begin position="163"/>
        <end position="183"/>
    </location>
</feature>
<feature type="transmembrane region" description="Helical" evidence="1">
    <location>
        <begin position="229"/>
        <end position="249"/>
    </location>
</feature>
<feature type="transmembrane region" description="Helical" evidence="1">
    <location>
        <begin position="257"/>
        <end position="277"/>
    </location>
</feature>
<feature type="transmembrane region" description="Helical" evidence="1">
    <location>
        <begin position="286"/>
        <end position="306"/>
    </location>
</feature>
<feature type="transmembrane region" description="Helical" evidence="1">
    <location>
        <begin position="310"/>
        <end position="330"/>
    </location>
</feature>
<feature type="transmembrane region" description="Helical" evidence="1">
    <location>
        <begin position="343"/>
        <end position="365"/>
    </location>
</feature>
<feature type="transmembrane region" description="Helical" evidence="1">
    <location>
        <begin position="375"/>
        <end position="395"/>
    </location>
</feature>
<protein>
    <recommendedName>
        <fullName evidence="1">Lysophospholipid transporter LplT</fullName>
    </recommendedName>
</protein>
<name>LPLT_PECCP</name>